<organism>
    <name type="scientific">Allenopithecus nigroviridis</name>
    <name type="common">Allen's swamp monkey</name>
    <dbReference type="NCBI Taxonomy" id="54135"/>
    <lineage>
        <taxon>Eukaryota</taxon>
        <taxon>Metazoa</taxon>
        <taxon>Chordata</taxon>
        <taxon>Craniata</taxon>
        <taxon>Vertebrata</taxon>
        <taxon>Euteleostomi</taxon>
        <taxon>Mammalia</taxon>
        <taxon>Eutheria</taxon>
        <taxon>Euarchontoglires</taxon>
        <taxon>Primates</taxon>
        <taxon>Haplorrhini</taxon>
        <taxon>Catarrhini</taxon>
        <taxon>Cercopithecidae</taxon>
        <taxon>Cercopithecinae</taxon>
        <taxon>Allenopithecus</taxon>
    </lineage>
</organism>
<reference key="1">
    <citation type="journal article" date="1997" name="Nature">
        <title>Episodic adaptive evolution of primate lysozymes.</title>
        <authorList>
            <person name="Messier W."/>
            <person name="Stewart C.B."/>
        </authorList>
    </citation>
    <scope>NUCLEOTIDE SEQUENCE [GENOMIC DNA]</scope>
    <source>
        <tissue>Blood</tissue>
    </source>
</reference>
<name>LYSC_ALLNI</name>
<comment type="function">
    <text>Lysozymes have primarily a bacteriolytic function; those in tissues and body fluids are associated with the monocyte-macrophage system and enhance the activity of immunoagents.</text>
</comment>
<comment type="catalytic activity">
    <reaction>
        <text>Hydrolysis of (1-&gt;4)-beta-linkages between N-acetylmuramic acid and N-acetyl-D-glucosamine residues in a peptidoglycan and between N-acetyl-D-glucosamine residues in chitodextrins.</text>
        <dbReference type="EC" id="3.2.1.17"/>
    </reaction>
</comment>
<comment type="subunit">
    <text>Monomer.</text>
</comment>
<comment type="miscellaneous">
    <text>Lysozyme C is capable of both hydrolysis and transglycosylation; it also shows a slight esterase activity. It acts rapidly on both peptide-substituted and unsubstituted peptidoglycan, and slowly on chitin oligosaccharides.</text>
</comment>
<comment type="similarity">
    <text evidence="2">Belongs to the glycosyl hydrolase 22 family.</text>
</comment>
<sequence length="148" mass="16497">MKAVIILGLVLLSVTVQGKIFERCELARTLKRLGLDGYRGISLANWVCLAKWESDYNTQATNYNPGDQSTDYGIFQINSHYWCNNGKTPGAVNACRISCNALLQDNIADAVTCAKRVVRDPQGIRAWVAWRNHCQNRDVSQYVQGCGV</sequence>
<feature type="signal peptide" evidence="1">
    <location>
        <begin position="1"/>
        <end position="18"/>
    </location>
</feature>
<feature type="chain" id="PRO_0000018452" description="Lysozyme C">
    <location>
        <begin position="19"/>
        <end position="148"/>
    </location>
</feature>
<feature type="domain" description="C-type lysozyme" evidence="2">
    <location>
        <begin position="19"/>
        <end position="148"/>
    </location>
</feature>
<feature type="active site" evidence="2">
    <location>
        <position position="53"/>
    </location>
</feature>
<feature type="active site" evidence="2">
    <location>
        <position position="71"/>
    </location>
</feature>
<feature type="disulfide bond" evidence="2">
    <location>
        <begin position="24"/>
        <end position="146"/>
    </location>
</feature>
<feature type="disulfide bond" evidence="2">
    <location>
        <begin position="48"/>
        <end position="134"/>
    </location>
</feature>
<feature type="disulfide bond" evidence="2">
    <location>
        <begin position="83"/>
        <end position="99"/>
    </location>
</feature>
<feature type="disulfide bond" evidence="2">
    <location>
        <begin position="95"/>
        <end position="113"/>
    </location>
</feature>
<dbReference type="EC" id="3.2.1.17"/>
<dbReference type="EMBL" id="U76951">
    <property type="protein sequence ID" value="AAB41219.1"/>
    <property type="molecule type" value="Genomic_DNA"/>
</dbReference>
<dbReference type="EMBL" id="U76949">
    <property type="protein sequence ID" value="AAB41219.1"/>
    <property type="status" value="JOINED"/>
    <property type="molecule type" value="Genomic_DNA"/>
</dbReference>
<dbReference type="EMBL" id="U76950">
    <property type="protein sequence ID" value="AAB41219.1"/>
    <property type="status" value="JOINED"/>
    <property type="molecule type" value="Genomic_DNA"/>
</dbReference>
<dbReference type="SMR" id="P79687"/>
<dbReference type="CAZy" id="GH22">
    <property type="family name" value="Glycoside Hydrolase Family 22"/>
</dbReference>
<dbReference type="GO" id="GO:0003796">
    <property type="term" value="F:lysozyme activity"/>
    <property type="evidence" value="ECO:0007669"/>
    <property type="project" value="UniProtKB-EC"/>
</dbReference>
<dbReference type="GO" id="GO:0050829">
    <property type="term" value="P:defense response to Gram-negative bacterium"/>
    <property type="evidence" value="ECO:0007669"/>
    <property type="project" value="TreeGrafter"/>
</dbReference>
<dbReference type="GO" id="GO:0050830">
    <property type="term" value="P:defense response to Gram-positive bacterium"/>
    <property type="evidence" value="ECO:0007669"/>
    <property type="project" value="TreeGrafter"/>
</dbReference>
<dbReference type="GO" id="GO:0031640">
    <property type="term" value="P:killing of cells of another organism"/>
    <property type="evidence" value="ECO:0007669"/>
    <property type="project" value="UniProtKB-KW"/>
</dbReference>
<dbReference type="CDD" id="cd16897">
    <property type="entry name" value="LYZ_C"/>
    <property type="match status" value="1"/>
</dbReference>
<dbReference type="FunFam" id="1.10.530.10:FF:000001">
    <property type="entry name" value="Lysozyme C"/>
    <property type="match status" value="1"/>
</dbReference>
<dbReference type="Gene3D" id="1.10.530.10">
    <property type="match status" value="1"/>
</dbReference>
<dbReference type="InterPro" id="IPR001916">
    <property type="entry name" value="Glyco_hydro_22"/>
</dbReference>
<dbReference type="InterPro" id="IPR019799">
    <property type="entry name" value="Glyco_hydro_22_CS"/>
</dbReference>
<dbReference type="InterPro" id="IPR000974">
    <property type="entry name" value="Glyco_hydro_22_lys"/>
</dbReference>
<dbReference type="InterPro" id="IPR023346">
    <property type="entry name" value="Lysozyme-like_dom_sf"/>
</dbReference>
<dbReference type="PANTHER" id="PTHR11407">
    <property type="entry name" value="LYSOZYME C"/>
    <property type="match status" value="1"/>
</dbReference>
<dbReference type="PANTHER" id="PTHR11407:SF28">
    <property type="entry name" value="LYSOZYME C"/>
    <property type="match status" value="1"/>
</dbReference>
<dbReference type="Pfam" id="PF00062">
    <property type="entry name" value="Lys"/>
    <property type="match status" value="1"/>
</dbReference>
<dbReference type="PRINTS" id="PR00137">
    <property type="entry name" value="LYSOZYME"/>
</dbReference>
<dbReference type="PRINTS" id="PR00135">
    <property type="entry name" value="LYZLACT"/>
</dbReference>
<dbReference type="SMART" id="SM00263">
    <property type="entry name" value="LYZ1"/>
    <property type="match status" value="1"/>
</dbReference>
<dbReference type="SUPFAM" id="SSF53955">
    <property type="entry name" value="Lysozyme-like"/>
    <property type="match status" value="1"/>
</dbReference>
<dbReference type="PROSITE" id="PS00128">
    <property type="entry name" value="GLYCOSYL_HYDROL_F22_1"/>
    <property type="match status" value="1"/>
</dbReference>
<dbReference type="PROSITE" id="PS51348">
    <property type="entry name" value="GLYCOSYL_HYDROL_F22_2"/>
    <property type="match status" value="1"/>
</dbReference>
<accession>P79687</accession>
<evidence type="ECO:0000250" key="1"/>
<evidence type="ECO:0000255" key="2">
    <source>
        <dbReference type="PROSITE-ProRule" id="PRU00680"/>
    </source>
</evidence>
<protein>
    <recommendedName>
        <fullName>Lysozyme C</fullName>
        <ecNumber>3.2.1.17</ecNumber>
    </recommendedName>
    <alternativeName>
        <fullName>1,4-beta-N-acetylmuramidase C</fullName>
    </alternativeName>
</protein>
<proteinExistence type="inferred from homology"/>
<gene>
    <name type="primary">LYZ</name>
    <name type="synonym">LZM</name>
</gene>
<keyword id="KW-0929">Antimicrobial</keyword>
<keyword id="KW-0081">Bacteriolytic enzyme</keyword>
<keyword id="KW-1015">Disulfide bond</keyword>
<keyword id="KW-0326">Glycosidase</keyword>
<keyword id="KW-0378">Hydrolase</keyword>
<keyword id="KW-0732">Signal</keyword>